<comment type="function">
    <text evidence="1">May be involved in follicular development. Seems to be an oocyte-specific growth/differentiation factor that stimulates folliculogenesis and granulosa cell (GC) growth (By similarity).</text>
</comment>
<comment type="subunit">
    <text evidence="1 3">Homodimer or heterodimer (Potential). But, in contrast to other members of this family, cannot be disulfide-linked (By similarity).</text>
</comment>
<comment type="subcellular location">
    <subcellularLocation>
        <location evidence="1">Secreted</location>
    </subcellularLocation>
</comment>
<comment type="similarity">
    <text evidence="3">Belongs to the TGF-beta family.</text>
</comment>
<protein>
    <recommendedName>
        <fullName>Bone morphogenetic protein 15</fullName>
        <shortName>BMP-15</shortName>
    </recommendedName>
</protein>
<sequence length="394" mass="45025">MVLLSILRILLLWGLVLFMEHRVQMTQVGQPSIAHLPEAPTLPLIQELLEEAPGKQQRKPRILGHPLRYMLELYQRSADASGHPRENRTIGATMVRLVRPLASVARPLRGSWHIQTLDFPLRPNRVAYQLVRATVVYRHQLHLTHSHLSCHVEPWVQKSPTNHFPSSGRGSSKPSLLPKAWTEMDIMEHVGQKLWNHKGRRVLRLRFVCQQPRGSEVREFWWHGTSSLDTVFLLLYFNDTQSVQKTKPLPKGLKEFTEKDPSLLLRRARQAGSIASEVPGPSREHDGPESNLCSLHPFQVSFQQLGWDHWIIAPHLYTPNYCKGVCPRVLHYGLNSPNHAIIQNLVNELVDQSVPQPSCVPYKYVPISILLIEANGSILYKEYEGMIAQSCTCR</sequence>
<reference key="1">
    <citation type="journal article" date="2004" name="Biol. Reprod.">
        <title>Spatio-temporal expression of the germ cell marker genes MATER, ZAR1, GDF9, BMP15, and VASA in adult bovine tissues, oocytes, and preimplantation embryos.</title>
        <authorList>
            <person name="Pennetier S."/>
            <person name="Uzbekova S."/>
            <person name="Perreau C."/>
            <person name="Papillier P."/>
            <person name="Mermillod P."/>
            <person name="Dalbies-Tran R."/>
        </authorList>
    </citation>
    <scope>NUCLEOTIDE SEQUENCE [MRNA]</scope>
</reference>
<reference key="2">
    <citation type="submission" date="2006-03" db="EMBL/GenBank/DDBJ databases">
        <title>Cloning of the cattle BMP15 gene.</title>
        <authorList>
            <person name="Liu Y.B."/>
            <person name="Qi Y."/>
            <person name="Wang F."/>
            <person name="Rong W."/>
        </authorList>
    </citation>
    <scope>NUCLEOTIDE SEQUENCE [GENOMIC DNA]</scope>
</reference>
<proteinExistence type="evidence at transcript level"/>
<organism>
    <name type="scientific">Bos taurus</name>
    <name type="common">Bovine</name>
    <dbReference type="NCBI Taxonomy" id="9913"/>
    <lineage>
        <taxon>Eukaryota</taxon>
        <taxon>Metazoa</taxon>
        <taxon>Chordata</taxon>
        <taxon>Craniata</taxon>
        <taxon>Vertebrata</taxon>
        <taxon>Euteleostomi</taxon>
        <taxon>Mammalia</taxon>
        <taxon>Eutheria</taxon>
        <taxon>Laurasiatheria</taxon>
        <taxon>Artiodactyla</taxon>
        <taxon>Ruminantia</taxon>
        <taxon>Pecora</taxon>
        <taxon>Bovidae</taxon>
        <taxon>Bovinae</taxon>
        <taxon>Bos</taxon>
    </lineage>
</organism>
<keyword id="KW-0202">Cytokine</keyword>
<keyword id="KW-1015">Disulfide bond</keyword>
<keyword id="KW-0325">Glycoprotein</keyword>
<keyword id="KW-0339">Growth factor</keyword>
<keyword id="KW-1185">Reference proteome</keyword>
<keyword id="KW-0964">Secreted</keyword>
<keyword id="KW-0732">Signal</keyword>
<name>BMP15_BOVIN</name>
<accession>Q6PX77</accession>
<evidence type="ECO:0000250" key="1"/>
<evidence type="ECO:0000255" key="2"/>
<evidence type="ECO:0000305" key="3"/>
<dbReference type="EMBL" id="AY572412">
    <property type="protein sequence ID" value="AAS99651.1"/>
    <property type="molecule type" value="mRNA"/>
</dbReference>
<dbReference type="EMBL" id="DQ463368">
    <property type="protein sequence ID" value="ABE97096.1"/>
    <property type="molecule type" value="mRNA"/>
</dbReference>
<dbReference type="RefSeq" id="NP_001026922.1">
    <property type="nucleotide sequence ID" value="NM_001031752.1"/>
</dbReference>
<dbReference type="SMR" id="Q6PX77"/>
<dbReference type="FunCoup" id="Q6PX77">
    <property type="interactions" value="32"/>
</dbReference>
<dbReference type="STRING" id="9913.ENSBTAP00000056137"/>
<dbReference type="GlyCosmos" id="Q6PX77">
    <property type="glycosylation" value="3 sites, No reported glycans"/>
</dbReference>
<dbReference type="GlyGen" id="Q6PX77">
    <property type="glycosylation" value="3 sites"/>
</dbReference>
<dbReference type="PaxDb" id="9913-ENSBTAP00000056137"/>
<dbReference type="GeneID" id="353351"/>
<dbReference type="KEGG" id="bta:353351"/>
<dbReference type="CTD" id="9210"/>
<dbReference type="VEuPathDB" id="HostDB:ENSBTAG00000045782"/>
<dbReference type="eggNOG" id="KOG3900">
    <property type="taxonomic scope" value="Eukaryota"/>
</dbReference>
<dbReference type="HOGENOM" id="CLU_055377_0_0_1"/>
<dbReference type="InParanoid" id="Q6PX77"/>
<dbReference type="OMA" id="VYRHQLH"/>
<dbReference type="OrthoDB" id="6427922at2759"/>
<dbReference type="TreeFam" id="TF316134"/>
<dbReference type="Reactome" id="R-BTA-381426">
    <property type="pathway name" value="Regulation of Insulin-like Growth Factor (IGF) transport and uptake by Insulin-like Growth Factor Binding Proteins (IGFBPs)"/>
</dbReference>
<dbReference type="Reactome" id="R-BTA-8957275">
    <property type="pathway name" value="Post-translational protein phosphorylation"/>
</dbReference>
<dbReference type="Proteomes" id="UP000009136">
    <property type="component" value="Chromosome X"/>
</dbReference>
<dbReference type="Bgee" id="ENSBTAG00000045782">
    <property type="expression patterns" value="Expressed in oocyte and 3 other cell types or tissues"/>
</dbReference>
<dbReference type="GO" id="GO:0005615">
    <property type="term" value="C:extracellular space"/>
    <property type="evidence" value="ECO:0000318"/>
    <property type="project" value="GO_Central"/>
</dbReference>
<dbReference type="GO" id="GO:0005125">
    <property type="term" value="F:cytokine activity"/>
    <property type="evidence" value="ECO:0000318"/>
    <property type="project" value="GO_Central"/>
</dbReference>
<dbReference type="GO" id="GO:0008083">
    <property type="term" value="F:growth factor activity"/>
    <property type="evidence" value="ECO:0007669"/>
    <property type="project" value="UniProtKB-KW"/>
</dbReference>
<dbReference type="CDD" id="cd19402">
    <property type="entry name" value="TGF_beta_GDF9B"/>
    <property type="match status" value="1"/>
</dbReference>
<dbReference type="FunFam" id="2.10.90.10:FF:000012">
    <property type="entry name" value="Growth/differentiation factor 9 (Predicted)"/>
    <property type="match status" value="1"/>
</dbReference>
<dbReference type="Gene3D" id="2.10.90.10">
    <property type="entry name" value="Cystine-knot cytokines"/>
    <property type="match status" value="1"/>
</dbReference>
<dbReference type="InterPro" id="IPR029034">
    <property type="entry name" value="Cystine-knot_cytokine"/>
</dbReference>
<dbReference type="InterPro" id="IPR001839">
    <property type="entry name" value="TGF-b_C"/>
</dbReference>
<dbReference type="InterPro" id="IPR015615">
    <property type="entry name" value="TGF-beta-rel"/>
</dbReference>
<dbReference type="InterPro" id="IPR017948">
    <property type="entry name" value="TGFb_CS"/>
</dbReference>
<dbReference type="PANTHER" id="PTHR11848:SF22">
    <property type="entry name" value="BONE MORPHOGENETIC PROTEIN 15"/>
    <property type="match status" value="1"/>
</dbReference>
<dbReference type="PANTHER" id="PTHR11848">
    <property type="entry name" value="TGF-BETA FAMILY"/>
    <property type="match status" value="1"/>
</dbReference>
<dbReference type="Pfam" id="PF00019">
    <property type="entry name" value="TGF_beta"/>
    <property type="match status" value="1"/>
</dbReference>
<dbReference type="PRINTS" id="PR00669">
    <property type="entry name" value="INHIBINA"/>
</dbReference>
<dbReference type="SMART" id="SM00204">
    <property type="entry name" value="TGFB"/>
    <property type="match status" value="1"/>
</dbReference>
<dbReference type="SUPFAM" id="SSF57501">
    <property type="entry name" value="Cystine-knot cytokines"/>
    <property type="match status" value="1"/>
</dbReference>
<dbReference type="PROSITE" id="PS00250">
    <property type="entry name" value="TGF_BETA_1"/>
    <property type="match status" value="1"/>
</dbReference>
<dbReference type="PROSITE" id="PS51362">
    <property type="entry name" value="TGF_BETA_2"/>
    <property type="match status" value="1"/>
</dbReference>
<feature type="signal peptide" evidence="2">
    <location>
        <begin position="1"/>
        <end position="18"/>
    </location>
</feature>
<feature type="propeptide" id="PRO_0000244399" evidence="1">
    <location>
        <begin position="19"/>
        <end position="269"/>
    </location>
</feature>
<feature type="chain" id="PRO_0000244400" description="Bone morphogenetic protein 15">
    <location>
        <begin position="270"/>
        <end position="394"/>
    </location>
</feature>
<feature type="glycosylation site" description="N-linked (GlcNAc...) asparagine" evidence="2">
    <location>
        <position position="87"/>
    </location>
</feature>
<feature type="glycosylation site" description="N-linked (GlcNAc...) asparagine" evidence="2">
    <location>
        <position position="238"/>
    </location>
</feature>
<feature type="glycosylation site" description="N-linked (GlcNAc...) asparagine" evidence="2">
    <location>
        <position position="375"/>
    </location>
</feature>
<feature type="disulfide bond" evidence="1">
    <location>
        <begin position="293"/>
        <end position="359"/>
    </location>
</feature>
<feature type="disulfide bond" evidence="1">
    <location>
        <begin position="322"/>
        <end position="391"/>
    </location>
</feature>
<feature type="disulfide bond" evidence="1">
    <location>
        <begin position="326"/>
        <end position="393"/>
    </location>
</feature>
<gene>
    <name type="primary">BMP15</name>
</gene>